<feature type="transit peptide" description="Mitochondrion" evidence="1">
    <location>
        <begin position="1"/>
        <end position="21"/>
    </location>
</feature>
<feature type="chain" id="PRO_0000402880" description="Translation factor GUF1, mitochondrial">
    <location>
        <begin position="22"/>
        <end position="657"/>
    </location>
</feature>
<feature type="domain" description="tr-type G">
    <location>
        <begin position="56"/>
        <end position="240"/>
    </location>
</feature>
<feature type="binding site" evidence="1">
    <location>
        <begin position="65"/>
        <end position="72"/>
    </location>
    <ligand>
        <name>GTP</name>
        <dbReference type="ChEBI" id="CHEBI:37565"/>
    </ligand>
</feature>
<feature type="binding site" evidence="1">
    <location>
        <begin position="132"/>
        <end position="136"/>
    </location>
    <ligand>
        <name>GTP</name>
        <dbReference type="ChEBI" id="CHEBI:37565"/>
    </ligand>
</feature>
<feature type="binding site" evidence="1">
    <location>
        <begin position="186"/>
        <end position="189"/>
    </location>
    <ligand>
        <name>GTP</name>
        <dbReference type="ChEBI" id="CHEBI:37565"/>
    </ligand>
</feature>
<evidence type="ECO:0000255" key="1">
    <source>
        <dbReference type="HAMAP-Rule" id="MF_03137"/>
    </source>
</evidence>
<evidence type="ECO:0000305" key="2"/>
<name>GUF1_CANGA</name>
<dbReference type="EC" id="3.6.5.-"/>
<dbReference type="EMBL" id="CR380955">
    <property type="protein sequence ID" value="CAG60219.1"/>
    <property type="molecule type" value="Genomic_DNA"/>
</dbReference>
<dbReference type="RefSeq" id="XP_447282.1">
    <property type="nucleotide sequence ID" value="XM_447282.1"/>
</dbReference>
<dbReference type="SMR" id="Q6FR62"/>
<dbReference type="FunCoup" id="Q6FR62">
    <property type="interactions" value="760"/>
</dbReference>
<dbReference type="STRING" id="284593.Q6FR62"/>
<dbReference type="EnsemblFungi" id="CAGL0I00660g-T">
    <property type="protein sequence ID" value="CAGL0I00660g-T-p1"/>
    <property type="gene ID" value="CAGL0I00660g"/>
</dbReference>
<dbReference type="KEGG" id="cgr:2889103"/>
<dbReference type="CGD" id="CAL0132114">
    <property type="gene designation" value="CAGL0I00660g"/>
</dbReference>
<dbReference type="VEuPathDB" id="FungiDB:B1J91_I00660g"/>
<dbReference type="VEuPathDB" id="FungiDB:CAGL0I00660g"/>
<dbReference type="eggNOG" id="KOG0462">
    <property type="taxonomic scope" value="Eukaryota"/>
</dbReference>
<dbReference type="HOGENOM" id="CLU_009995_3_1_1"/>
<dbReference type="InParanoid" id="Q6FR62"/>
<dbReference type="OMA" id="QVKCDEN"/>
<dbReference type="Proteomes" id="UP000002428">
    <property type="component" value="Chromosome I"/>
</dbReference>
<dbReference type="GO" id="GO:0005743">
    <property type="term" value="C:mitochondrial inner membrane"/>
    <property type="evidence" value="ECO:0007669"/>
    <property type="project" value="UniProtKB-SubCell"/>
</dbReference>
<dbReference type="GO" id="GO:0005759">
    <property type="term" value="C:mitochondrial matrix"/>
    <property type="evidence" value="ECO:0007669"/>
    <property type="project" value="UniProtKB-UniRule"/>
</dbReference>
<dbReference type="GO" id="GO:0005525">
    <property type="term" value="F:GTP binding"/>
    <property type="evidence" value="ECO:0007669"/>
    <property type="project" value="UniProtKB-UniRule"/>
</dbReference>
<dbReference type="GO" id="GO:0003924">
    <property type="term" value="F:GTPase activity"/>
    <property type="evidence" value="ECO:0007669"/>
    <property type="project" value="UniProtKB-UniRule"/>
</dbReference>
<dbReference type="GO" id="GO:0097177">
    <property type="term" value="F:mitochondrial ribosome binding"/>
    <property type="evidence" value="ECO:0007669"/>
    <property type="project" value="EnsemblFungi"/>
</dbReference>
<dbReference type="GO" id="GO:0045727">
    <property type="term" value="P:positive regulation of translation"/>
    <property type="evidence" value="ECO:0007669"/>
    <property type="project" value="UniProtKB-UniRule"/>
</dbReference>
<dbReference type="GO" id="GO:0006412">
    <property type="term" value="P:translation"/>
    <property type="evidence" value="ECO:0007669"/>
    <property type="project" value="UniProtKB-KW"/>
</dbReference>
<dbReference type="CDD" id="cd03699">
    <property type="entry name" value="EF4_II"/>
    <property type="match status" value="1"/>
</dbReference>
<dbReference type="CDD" id="cd16260">
    <property type="entry name" value="EF4_III"/>
    <property type="match status" value="1"/>
</dbReference>
<dbReference type="CDD" id="cd01890">
    <property type="entry name" value="LepA"/>
    <property type="match status" value="1"/>
</dbReference>
<dbReference type="CDD" id="cd03709">
    <property type="entry name" value="lepA_C"/>
    <property type="match status" value="1"/>
</dbReference>
<dbReference type="FunFam" id="3.40.50.300:FF:000078">
    <property type="entry name" value="Elongation factor 4"/>
    <property type="match status" value="1"/>
</dbReference>
<dbReference type="FunFam" id="2.40.30.10:FF:000015">
    <property type="entry name" value="Translation factor GUF1, mitochondrial"/>
    <property type="match status" value="1"/>
</dbReference>
<dbReference type="FunFam" id="3.30.70.240:FF:000007">
    <property type="entry name" value="Translation factor GUF1, mitochondrial"/>
    <property type="match status" value="1"/>
</dbReference>
<dbReference type="FunFam" id="3.30.70.2570:FF:000001">
    <property type="entry name" value="Translation factor GUF1, mitochondrial"/>
    <property type="match status" value="1"/>
</dbReference>
<dbReference type="FunFam" id="3.30.70.870:FF:000004">
    <property type="entry name" value="Translation factor GUF1, mitochondrial"/>
    <property type="match status" value="1"/>
</dbReference>
<dbReference type="Gene3D" id="3.30.70.240">
    <property type="match status" value="1"/>
</dbReference>
<dbReference type="Gene3D" id="3.30.70.2570">
    <property type="entry name" value="Elongation factor 4, C-terminal domain"/>
    <property type="match status" value="1"/>
</dbReference>
<dbReference type="Gene3D" id="3.30.70.870">
    <property type="entry name" value="Elongation Factor G (Translational Gtpase), domain 3"/>
    <property type="match status" value="1"/>
</dbReference>
<dbReference type="Gene3D" id="3.40.50.300">
    <property type="entry name" value="P-loop containing nucleotide triphosphate hydrolases"/>
    <property type="match status" value="1"/>
</dbReference>
<dbReference type="Gene3D" id="2.40.30.10">
    <property type="entry name" value="Translation factors"/>
    <property type="match status" value="1"/>
</dbReference>
<dbReference type="HAMAP" id="MF_00071">
    <property type="entry name" value="LepA"/>
    <property type="match status" value="1"/>
</dbReference>
<dbReference type="InterPro" id="IPR006297">
    <property type="entry name" value="EF-4"/>
</dbReference>
<dbReference type="InterPro" id="IPR035647">
    <property type="entry name" value="EFG_III/V"/>
</dbReference>
<dbReference type="InterPro" id="IPR000640">
    <property type="entry name" value="EFG_V-like"/>
</dbReference>
<dbReference type="InterPro" id="IPR004161">
    <property type="entry name" value="EFTu-like_2"/>
</dbReference>
<dbReference type="InterPro" id="IPR031157">
    <property type="entry name" value="G_TR_CS"/>
</dbReference>
<dbReference type="InterPro" id="IPR038363">
    <property type="entry name" value="LepA_C_sf"/>
</dbReference>
<dbReference type="InterPro" id="IPR013842">
    <property type="entry name" value="LepA_CTD"/>
</dbReference>
<dbReference type="InterPro" id="IPR035654">
    <property type="entry name" value="LepA_IV"/>
</dbReference>
<dbReference type="InterPro" id="IPR027417">
    <property type="entry name" value="P-loop_NTPase"/>
</dbReference>
<dbReference type="InterPro" id="IPR005225">
    <property type="entry name" value="Small_GTP-bd"/>
</dbReference>
<dbReference type="InterPro" id="IPR000795">
    <property type="entry name" value="T_Tr_GTP-bd_dom"/>
</dbReference>
<dbReference type="InterPro" id="IPR009000">
    <property type="entry name" value="Transl_B-barrel_sf"/>
</dbReference>
<dbReference type="NCBIfam" id="TIGR01393">
    <property type="entry name" value="lepA"/>
    <property type="match status" value="1"/>
</dbReference>
<dbReference type="NCBIfam" id="TIGR00231">
    <property type="entry name" value="small_GTP"/>
    <property type="match status" value="1"/>
</dbReference>
<dbReference type="PANTHER" id="PTHR43512:SF7">
    <property type="entry name" value="TRANSLATION FACTOR GUF1, MITOCHONDRIAL"/>
    <property type="match status" value="1"/>
</dbReference>
<dbReference type="PANTHER" id="PTHR43512">
    <property type="entry name" value="TRANSLATION FACTOR GUF1-RELATED"/>
    <property type="match status" value="1"/>
</dbReference>
<dbReference type="Pfam" id="PF00679">
    <property type="entry name" value="EFG_C"/>
    <property type="match status" value="1"/>
</dbReference>
<dbReference type="Pfam" id="PF00009">
    <property type="entry name" value="GTP_EFTU"/>
    <property type="match status" value="1"/>
</dbReference>
<dbReference type="Pfam" id="PF03144">
    <property type="entry name" value="GTP_EFTU_D2"/>
    <property type="match status" value="1"/>
</dbReference>
<dbReference type="Pfam" id="PF06421">
    <property type="entry name" value="LepA_C"/>
    <property type="match status" value="1"/>
</dbReference>
<dbReference type="PRINTS" id="PR00315">
    <property type="entry name" value="ELONGATNFCT"/>
</dbReference>
<dbReference type="SUPFAM" id="SSF54980">
    <property type="entry name" value="EF-G C-terminal domain-like"/>
    <property type="match status" value="2"/>
</dbReference>
<dbReference type="SUPFAM" id="SSF52540">
    <property type="entry name" value="P-loop containing nucleoside triphosphate hydrolases"/>
    <property type="match status" value="1"/>
</dbReference>
<dbReference type="SUPFAM" id="SSF50447">
    <property type="entry name" value="Translation proteins"/>
    <property type="match status" value="1"/>
</dbReference>
<dbReference type="PROSITE" id="PS00301">
    <property type="entry name" value="G_TR_1"/>
    <property type="match status" value="1"/>
</dbReference>
<dbReference type="PROSITE" id="PS51722">
    <property type="entry name" value="G_TR_2"/>
    <property type="match status" value="1"/>
</dbReference>
<sequence>MLKTLGLRSLCPSLGGRGFRRHPNINKYTLSLVRVRWNHHLSNAEIQARIENIPQENYRNFSIVAHVDHGKSTLSDRLLEITGVIDKNSSNKQVLDKLEVERERGITIKAQTCTMFYHDKRNGEDYLLHLVDTPGHVDFRGEVSRSYASCGGALLLVDASQGVQAQTVANFYLAYSMGLKLIPVVNKIDLNVADVERAKAEIEDNFELPRDEIIGVSAKTGLNVKEMLLPTIVDRIPPPTGNKKKPFRALLVDSWYDSYLGVILLVNIVDGKLKKGEKVLCAHTNKKYEVKELGIMYPDRVPTGSLVVGQVGYVVLGMKDSSDAHVGDTLMHVGKESVTDILPGFEEQKPMVYVGAFPSTGTEFKAMDDDINRLVLNDRSVTLERETSNALGQGWRLGFLGSLHASVFRERLEKEYGSKLIITQPTVPYMVRMTDGTESIITNPDDFPDSATRRMKVEELLEPFVEATITLPQEFLGNVIKLCDANRGQQKEITYLNTRGQVVLKYHLPLAHLVDDFFGKLKAASKGYASLDYEDIGYRESDVVKLELLVNGQSIDALARVLHRTEVEKVGREWVQKFKEYVKSQLFEVVIQARAGTKIVARQTIKARRKDVLARLHASDVSRRKKLLEKQKEGKKQMRSVGRVQINQEAYQAFLKR</sequence>
<gene>
    <name evidence="1" type="primary">GUF1</name>
    <name type="ordered locus">CAGL0I00660g</name>
</gene>
<organism>
    <name type="scientific">Candida glabrata (strain ATCC 2001 / BCRC 20586 / JCM 3761 / NBRC 0622 / NRRL Y-65 / CBS 138)</name>
    <name type="common">Yeast</name>
    <name type="synonym">Nakaseomyces glabratus</name>
    <dbReference type="NCBI Taxonomy" id="284593"/>
    <lineage>
        <taxon>Eukaryota</taxon>
        <taxon>Fungi</taxon>
        <taxon>Dikarya</taxon>
        <taxon>Ascomycota</taxon>
        <taxon>Saccharomycotina</taxon>
        <taxon>Saccharomycetes</taxon>
        <taxon>Saccharomycetales</taxon>
        <taxon>Saccharomycetaceae</taxon>
        <taxon>Nakaseomyces</taxon>
    </lineage>
</organism>
<accession>Q6FR62</accession>
<protein>
    <recommendedName>
        <fullName evidence="1">Translation factor GUF1, mitochondrial</fullName>
        <ecNumber>3.6.5.-</ecNumber>
    </recommendedName>
    <alternativeName>
        <fullName evidence="1">Elongation factor 4 homolog</fullName>
        <shortName evidence="1">EF-4</shortName>
    </alternativeName>
    <alternativeName>
        <fullName evidence="1">GTPase GUF1</fullName>
    </alternativeName>
    <alternativeName>
        <fullName evidence="1">Ribosomal back-translocase</fullName>
    </alternativeName>
</protein>
<reference key="1">
    <citation type="journal article" date="2004" name="Nature">
        <title>Genome evolution in yeasts.</title>
        <authorList>
            <person name="Dujon B."/>
            <person name="Sherman D."/>
            <person name="Fischer G."/>
            <person name="Durrens P."/>
            <person name="Casaregola S."/>
            <person name="Lafontaine I."/>
            <person name="de Montigny J."/>
            <person name="Marck C."/>
            <person name="Neuveglise C."/>
            <person name="Talla E."/>
            <person name="Goffard N."/>
            <person name="Frangeul L."/>
            <person name="Aigle M."/>
            <person name="Anthouard V."/>
            <person name="Babour A."/>
            <person name="Barbe V."/>
            <person name="Barnay S."/>
            <person name="Blanchin S."/>
            <person name="Beckerich J.-M."/>
            <person name="Beyne E."/>
            <person name="Bleykasten C."/>
            <person name="Boisrame A."/>
            <person name="Boyer J."/>
            <person name="Cattolico L."/>
            <person name="Confanioleri F."/>
            <person name="de Daruvar A."/>
            <person name="Despons L."/>
            <person name="Fabre E."/>
            <person name="Fairhead C."/>
            <person name="Ferry-Dumazet H."/>
            <person name="Groppi A."/>
            <person name="Hantraye F."/>
            <person name="Hennequin C."/>
            <person name="Jauniaux N."/>
            <person name="Joyet P."/>
            <person name="Kachouri R."/>
            <person name="Kerrest A."/>
            <person name="Koszul R."/>
            <person name="Lemaire M."/>
            <person name="Lesur I."/>
            <person name="Ma L."/>
            <person name="Muller H."/>
            <person name="Nicaud J.-M."/>
            <person name="Nikolski M."/>
            <person name="Oztas S."/>
            <person name="Ozier-Kalogeropoulos O."/>
            <person name="Pellenz S."/>
            <person name="Potier S."/>
            <person name="Richard G.-F."/>
            <person name="Straub M.-L."/>
            <person name="Suleau A."/>
            <person name="Swennen D."/>
            <person name="Tekaia F."/>
            <person name="Wesolowski-Louvel M."/>
            <person name="Westhof E."/>
            <person name="Wirth B."/>
            <person name="Zeniou-Meyer M."/>
            <person name="Zivanovic Y."/>
            <person name="Bolotin-Fukuhara M."/>
            <person name="Thierry A."/>
            <person name="Bouchier C."/>
            <person name="Caudron B."/>
            <person name="Scarpelli C."/>
            <person name="Gaillardin C."/>
            <person name="Weissenbach J."/>
            <person name="Wincker P."/>
            <person name="Souciet J.-L."/>
        </authorList>
    </citation>
    <scope>NUCLEOTIDE SEQUENCE [LARGE SCALE GENOMIC DNA]</scope>
    <source>
        <strain>ATCC 2001 / BCRC 20586 / JCM 3761 / NBRC 0622 / NRRL Y-65 / CBS 138</strain>
    </source>
</reference>
<comment type="function">
    <text evidence="1">Promotes mitochondrial protein synthesis. May act as a fidelity factor of the translation reaction, by catalyzing a one-codon backward translocation of tRNAs on improperly translocated ribosomes. Binds to mitochondrial ribosomes in a GTP-dependent manner.</text>
</comment>
<comment type="catalytic activity">
    <reaction evidence="1">
        <text>GTP + H2O = GDP + phosphate + H(+)</text>
        <dbReference type="Rhea" id="RHEA:19669"/>
        <dbReference type="ChEBI" id="CHEBI:15377"/>
        <dbReference type="ChEBI" id="CHEBI:15378"/>
        <dbReference type="ChEBI" id="CHEBI:37565"/>
        <dbReference type="ChEBI" id="CHEBI:43474"/>
        <dbReference type="ChEBI" id="CHEBI:58189"/>
    </reaction>
</comment>
<comment type="subcellular location">
    <subcellularLocation>
        <location evidence="1">Mitochondrion inner membrane</location>
        <topology evidence="1">Peripheral membrane protein</topology>
        <orientation evidence="1">Matrix side</orientation>
    </subcellularLocation>
</comment>
<comment type="similarity">
    <text evidence="2">Belongs to the TRAFAC class translation factor GTPase superfamily. Classic translation factor GTPase family. LepA subfamily.</text>
</comment>
<keyword id="KW-0342">GTP-binding</keyword>
<keyword id="KW-0378">Hydrolase</keyword>
<keyword id="KW-0472">Membrane</keyword>
<keyword id="KW-0496">Mitochondrion</keyword>
<keyword id="KW-0999">Mitochondrion inner membrane</keyword>
<keyword id="KW-0547">Nucleotide-binding</keyword>
<keyword id="KW-0648">Protein biosynthesis</keyword>
<keyword id="KW-1185">Reference proteome</keyword>
<keyword id="KW-0809">Transit peptide</keyword>
<proteinExistence type="inferred from homology"/>